<accession>B7UQK9</accession>
<sequence length="131" mass="15187">MRHYEIVFMVHPDQSEQVPGMIERYTAAITGAEGKIHRLEDWGRRQLAYPINKLHKAHYVLMNVEAPQEVIDELETTFRFNDAVIRSMVMRTKHAVTEASPMVKAKDERRERRDDFANETADDAEAGDSEE</sequence>
<name>RS6_ECO27</name>
<feature type="chain" id="PRO_1000133527" description="Small ribosomal subunit protein bS6">
    <location>
        <begin position="1"/>
        <end position="131"/>
    </location>
</feature>
<feature type="region of interest" description="Disordered" evidence="2">
    <location>
        <begin position="98"/>
        <end position="131"/>
    </location>
</feature>
<feature type="compositionally biased region" description="Basic and acidic residues" evidence="2">
    <location>
        <begin position="104"/>
        <end position="116"/>
    </location>
</feature>
<feature type="compositionally biased region" description="Acidic residues" evidence="2">
    <location>
        <begin position="120"/>
        <end position="131"/>
    </location>
</feature>
<feature type="modified residue" description="N6-acetyllysine" evidence="1">
    <location>
        <position position="93"/>
    </location>
</feature>
<reference key="1">
    <citation type="journal article" date="2009" name="J. Bacteriol.">
        <title>Complete genome sequence and comparative genome analysis of enteropathogenic Escherichia coli O127:H6 strain E2348/69.</title>
        <authorList>
            <person name="Iguchi A."/>
            <person name="Thomson N.R."/>
            <person name="Ogura Y."/>
            <person name="Saunders D."/>
            <person name="Ooka T."/>
            <person name="Henderson I.R."/>
            <person name="Harris D."/>
            <person name="Asadulghani M."/>
            <person name="Kurokawa K."/>
            <person name="Dean P."/>
            <person name="Kenny B."/>
            <person name="Quail M.A."/>
            <person name="Thurston S."/>
            <person name="Dougan G."/>
            <person name="Hayashi T."/>
            <person name="Parkhill J."/>
            <person name="Frankel G."/>
        </authorList>
    </citation>
    <scope>NUCLEOTIDE SEQUENCE [LARGE SCALE GENOMIC DNA]</scope>
    <source>
        <strain>E2348/69 / EPEC</strain>
    </source>
</reference>
<proteinExistence type="inferred from homology"/>
<organism>
    <name type="scientific">Escherichia coli O127:H6 (strain E2348/69 / EPEC)</name>
    <dbReference type="NCBI Taxonomy" id="574521"/>
    <lineage>
        <taxon>Bacteria</taxon>
        <taxon>Pseudomonadati</taxon>
        <taxon>Pseudomonadota</taxon>
        <taxon>Gammaproteobacteria</taxon>
        <taxon>Enterobacterales</taxon>
        <taxon>Enterobacteriaceae</taxon>
        <taxon>Escherichia</taxon>
    </lineage>
</organism>
<gene>
    <name evidence="1" type="primary">rpsF</name>
    <name type="ordered locus">E2348C_4523</name>
</gene>
<comment type="function">
    <text evidence="1">Binds together with bS18 to 16S ribosomal RNA.</text>
</comment>
<comment type="similarity">
    <text evidence="1">Belongs to the bacterial ribosomal protein bS6 family.</text>
</comment>
<evidence type="ECO:0000255" key="1">
    <source>
        <dbReference type="HAMAP-Rule" id="MF_00360"/>
    </source>
</evidence>
<evidence type="ECO:0000256" key="2">
    <source>
        <dbReference type="SAM" id="MobiDB-lite"/>
    </source>
</evidence>
<evidence type="ECO:0000305" key="3"/>
<dbReference type="EMBL" id="FM180568">
    <property type="protein sequence ID" value="CAS12071.1"/>
    <property type="molecule type" value="Genomic_DNA"/>
</dbReference>
<dbReference type="RefSeq" id="WP_001216676.1">
    <property type="nucleotide sequence ID" value="NC_011601.1"/>
</dbReference>
<dbReference type="SMR" id="B7UQK9"/>
<dbReference type="GeneID" id="93777623"/>
<dbReference type="KEGG" id="ecg:E2348C_4523"/>
<dbReference type="HOGENOM" id="CLU_113441_6_1_6"/>
<dbReference type="Proteomes" id="UP000008205">
    <property type="component" value="Chromosome"/>
</dbReference>
<dbReference type="GO" id="GO:0022627">
    <property type="term" value="C:cytosolic small ribosomal subunit"/>
    <property type="evidence" value="ECO:0007669"/>
    <property type="project" value="TreeGrafter"/>
</dbReference>
<dbReference type="GO" id="GO:0070181">
    <property type="term" value="F:small ribosomal subunit rRNA binding"/>
    <property type="evidence" value="ECO:0007669"/>
    <property type="project" value="TreeGrafter"/>
</dbReference>
<dbReference type="GO" id="GO:0003735">
    <property type="term" value="F:structural constituent of ribosome"/>
    <property type="evidence" value="ECO:0007669"/>
    <property type="project" value="InterPro"/>
</dbReference>
<dbReference type="GO" id="GO:0006412">
    <property type="term" value="P:translation"/>
    <property type="evidence" value="ECO:0007669"/>
    <property type="project" value="UniProtKB-UniRule"/>
</dbReference>
<dbReference type="CDD" id="cd00473">
    <property type="entry name" value="bS6"/>
    <property type="match status" value="1"/>
</dbReference>
<dbReference type="FunFam" id="3.30.70.60:FF:000003">
    <property type="entry name" value="30S ribosomal protein S6"/>
    <property type="match status" value="1"/>
</dbReference>
<dbReference type="Gene3D" id="3.30.70.60">
    <property type="match status" value="1"/>
</dbReference>
<dbReference type="HAMAP" id="MF_00360">
    <property type="entry name" value="Ribosomal_bS6"/>
    <property type="match status" value="1"/>
</dbReference>
<dbReference type="InterPro" id="IPR000529">
    <property type="entry name" value="Ribosomal_bS6"/>
</dbReference>
<dbReference type="InterPro" id="IPR020815">
    <property type="entry name" value="Ribosomal_bS6_CS"/>
</dbReference>
<dbReference type="InterPro" id="IPR035980">
    <property type="entry name" value="Ribosomal_bS6_sf"/>
</dbReference>
<dbReference type="InterPro" id="IPR020814">
    <property type="entry name" value="Ribosomal_S6_plastid/chlpt"/>
</dbReference>
<dbReference type="InterPro" id="IPR014717">
    <property type="entry name" value="Transl_elong_EF1B/ribsomal_bS6"/>
</dbReference>
<dbReference type="NCBIfam" id="TIGR00166">
    <property type="entry name" value="S6"/>
    <property type="match status" value="1"/>
</dbReference>
<dbReference type="PANTHER" id="PTHR21011">
    <property type="entry name" value="MITOCHONDRIAL 28S RIBOSOMAL PROTEIN S6"/>
    <property type="match status" value="1"/>
</dbReference>
<dbReference type="PANTHER" id="PTHR21011:SF1">
    <property type="entry name" value="SMALL RIBOSOMAL SUBUNIT PROTEIN BS6M"/>
    <property type="match status" value="1"/>
</dbReference>
<dbReference type="Pfam" id="PF01250">
    <property type="entry name" value="Ribosomal_S6"/>
    <property type="match status" value="1"/>
</dbReference>
<dbReference type="SUPFAM" id="SSF54995">
    <property type="entry name" value="Ribosomal protein S6"/>
    <property type="match status" value="1"/>
</dbReference>
<dbReference type="PROSITE" id="PS01048">
    <property type="entry name" value="RIBOSOMAL_S6"/>
    <property type="match status" value="1"/>
</dbReference>
<protein>
    <recommendedName>
        <fullName evidence="1">Small ribosomal subunit protein bS6</fullName>
    </recommendedName>
    <alternativeName>
        <fullName evidence="3">30S ribosomal protein S6</fullName>
    </alternativeName>
</protein>
<keyword id="KW-0007">Acetylation</keyword>
<keyword id="KW-1185">Reference proteome</keyword>
<keyword id="KW-0687">Ribonucleoprotein</keyword>
<keyword id="KW-0689">Ribosomal protein</keyword>
<keyword id="KW-0694">RNA-binding</keyword>
<keyword id="KW-0699">rRNA-binding</keyword>